<gene>
    <name evidence="2" type="primary">tal</name>
    <name type="ordered locus">CPS_4104</name>
</gene>
<dbReference type="EC" id="2.2.1.2" evidence="2"/>
<dbReference type="EMBL" id="CP000083">
    <property type="protein sequence ID" value="AAZ27306.1"/>
    <property type="molecule type" value="Genomic_DNA"/>
</dbReference>
<dbReference type="RefSeq" id="WP_011044840.1">
    <property type="nucleotide sequence ID" value="NC_003910.7"/>
</dbReference>
<dbReference type="SMR" id="Q47WR3"/>
<dbReference type="STRING" id="167879.CPS_4104"/>
<dbReference type="KEGG" id="cps:CPS_4104"/>
<dbReference type="eggNOG" id="COG0176">
    <property type="taxonomic scope" value="Bacteria"/>
</dbReference>
<dbReference type="HOGENOM" id="CLU_047470_0_1_6"/>
<dbReference type="UniPathway" id="UPA00115">
    <property type="reaction ID" value="UER00414"/>
</dbReference>
<dbReference type="Proteomes" id="UP000000547">
    <property type="component" value="Chromosome"/>
</dbReference>
<dbReference type="GO" id="GO:0005829">
    <property type="term" value="C:cytosol"/>
    <property type="evidence" value="ECO:0007669"/>
    <property type="project" value="TreeGrafter"/>
</dbReference>
<dbReference type="GO" id="GO:0004801">
    <property type="term" value="F:transaldolase activity"/>
    <property type="evidence" value="ECO:0000250"/>
    <property type="project" value="UniProtKB"/>
</dbReference>
<dbReference type="GO" id="GO:0005975">
    <property type="term" value="P:carbohydrate metabolic process"/>
    <property type="evidence" value="ECO:0007669"/>
    <property type="project" value="InterPro"/>
</dbReference>
<dbReference type="GO" id="GO:0006098">
    <property type="term" value="P:pentose-phosphate shunt"/>
    <property type="evidence" value="ECO:0007669"/>
    <property type="project" value="UniProtKB-UniRule"/>
</dbReference>
<dbReference type="CDD" id="cd00957">
    <property type="entry name" value="Transaldolase_TalAB"/>
    <property type="match status" value="1"/>
</dbReference>
<dbReference type="FunFam" id="3.20.20.70:FF:000002">
    <property type="entry name" value="Transaldolase"/>
    <property type="match status" value="1"/>
</dbReference>
<dbReference type="Gene3D" id="3.20.20.70">
    <property type="entry name" value="Aldolase class I"/>
    <property type="match status" value="1"/>
</dbReference>
<dbReference type="HAMAP" id="MF_00492">
    <property type="entry name" value="Transaldolase_1"/>
    <property type="match status" value="1"/>
</dbReference>
<dbReference type="InterPro" id="IPR013785">
    <property type="entry name" value="Aldolase_TIM"/>
</dbReference>
<dbReference type="InterPro" id="IPR001585">
    <property type="entry name" value="TAL/FSA"/>
</dbReference>
<dbReference type="InterPro" id="IPR004730">
    <property type="entry name" value="Transaldolase_1"/>
</dbReference>
<dbReference type="InterPro" id="IPR018225">
    <property type="entry name" value="Transaldolase_AS"/>
</dbReference>
<dbReference type="NCBIfam" id="NF009001">
    <property type="entry name" value="PRK12346.1"/>
    <property type="match status" value="1"/>
</dbReference>
<dbReference type="NCBIfam" id="TIGR00874">
    <property type="entry name" value="talAB"/>
    <property type="match status" value="1"/>
</dbReference>
<dbReference type="PANTHER" id="PTHR10683">
    <property type="entry name" value="TRANSALDOLASE"/>
    <property type="match status" value="1"/>
</dbReference>
<dbReference type="PANTHER" id="PTHR10683:SF18">
    <property type="entry name" value="TRANSALDOLASE"/>
    <property type="match status" value="1"/>
</dbReference>
<dbReference type="Pfam" id="PF00923">
    <property type="entry name" value="TAL_FSA"/>
    <property type="match status" value="1"/>
</dbReference>
<dbReference type="SUPFAM" id="SSF51569">
    <property type="entry name" value="Aldolase"/>
    <property type="match status" value="1"/>
</dbReference>
<dbReference type="PROSITE" id="PS01054">
    <property type="entry name" value="TRANSALDOLASE_1"/>
    <property type="match status" value="1"/>
</dbReference>
<dbReference type="PROSITE" id="PS00958">
    <property type="entry name" value="TRANSALDOLASE_2"/>
    <property type="match status" value="1"/>
</dbReference>
<sequence length="320" mass="35014">MTNSSSQLAQLKQMTTVVADTGDIEAIAKFQPQDATTNPSLLLKAASLPNYQGLVKDSVAWAKTQSDNAEQQVIDAADKISVLIGLEILKIVPGRISTEVDARLSFDTSASITKAHKLIAMYNEAGISNDRILIKLASTWEGIKAAEQLEQEGINCNLTLLFSFAQARACAEAGAYLISPFVGRILDWYKKDTGRNDYASNEDPGVVSVTSIFNYYKLQGFNTVVMGASFRNIGEILELAGCDRLTISPQLMEELANSTDTVIQKLTACEATAEKEAALSQAEFRWQMNEDPMATEKLAEGIRNFTIDQVKLEKQLTDLL</sequence>
<proteinExistence type="inferred from homology"/>
<name>TAL_COLP3</name>
<protein>
    <recommendedName>
        <fullName evidence="2">Transaldolase</fullName>
        <ecNumber evidence="2">2.2.1.2</ecNumber>
    </recommendedName>
</protein>
<reference key="1">
    <citation type="journal article" date="2005" name="Proc. Natl. Acad. Sci. U.S.A.">
        <title>The psychrophilic lifestyle as revealed by the genome sequence of Colwellia psychrerythraea 34H through genomic and proteomic analyses.</title>
        <authorList>
            <person name="Methe B.A."/>
            <person name="Nelson K.E."/>
            <person name="Deming J.W."/>
            <person name="Momen B."/>
            <person name="Melamud E."/>
            <person name="Zhang X."/>
            <person name="Moult J."/>
            <person name="Madupu R."/>
            <person name="Nelson W.C."/>
            <person name="Dodson R.J."/>
            <person name="Brinkac L.M."/>
            <person name="Daugherty S.C."/>
            <person name="Durkin A.S."/>
            <person name="DeBoy R.T."/>
            <person name="Kolonay J.F."/>
            <person name="Sullivan S.A."/>
            <person name="Zhou L."/>
            <person name="Davidsen T.M."/>
            <person name="Wu M."/>
            <person name="Huston A.L."/>
            <person name="Lewis M."/>
            <person name="Weaver B."/>
            <person name="Weidman J.F."/>
            <person name="Khouri H."/>
            <person name="Utterback T.R."/>
            <person name="Feldblyum T.V."/>
            <person name="Fraser C.M."/>
        </authorList>
    </citation>
    <scope>NUCLEOTIDE SEQUENCE [LARGE SCALE GENOMIC DNA]</scope>
    <source>
        <strain>34H / ATCC BAA-681</strain>
    </source>
</reference>
<accession>Q47WR3</accession>
<comment type="function">
    <text evidence="2">Transaldolase is important for the balance of metabolites in the pentose-phosphate pathway.</text>
</comment>
<comment type="catalytic activity">
    <reaction evidence="2">
        <text>D-sedoheptulose 7-phosphate + D-glyceraldehyde 3-phosphate = D-erythrose 4-phosphate + beta-D-fructose 6-phosphate</text>
        <dbReference type="Rhea" id="RHEA:17053"/>
        <dbReference type="ChEBI" id="CHEBI:16897"/>
        <dbReference type="ChEBI" id="CHEBI:57483"/>
        <dbReference type="ChEBI" id="CHEBI:57634"/>
        <dbReference type="ChEBI" id="CHEBI:59776"/>
        <dbReference type="EC" id="2.2.1.2"/>
    </reaction>
</comment>
<comment type="pathway">
    <text evidence="2">Carbohydrate degradation; pentose phosphate pathway; D-glyceraldehyde 3-phosphate and beta-D-fructose 6-phosphate from D-ribose 5-phosphate and D-xylulose 5-phosphate (non-oxidative stage): step 2/3.</text>
</comment>
<comment type="subunit">
    <text evidence="1">Homodimer.</text>
</comment>
<comment type="subcellular location">
    <subcellularLocation>
        <location evidence="2">Cytoplasm</location>
    </subcellularLocation>
</comment>
<comment type="similarity">
    <text evidence="2">Belongs to the transaldolase family. Type 1 subfamily.</text>
</comment>
<evidence type="ECO:0000250" key="1"/>
<evidence type="ECO:0000255" key="2">
    <source>
        <dbReference type="HAMAP-Rule" id="MF_00492"/>
    </source>
</evidence>
<keyword id="KW-0963">Cytoplasm</keyword>
<keyword id="KW-0570">Pentose shunt</keyword>
<keyword id="KW-0704">Schiff base</keyword>
<keyword id="KW-0808">Transferase</keyword>
<organism>
    <name type="scientific">Colwellia psychrerythraea (strain 34H / ATCC BAA-681)</name>
    <name type="common">Vibrio psychroerythus</name>
    <dbReference type="NCBI Taxonomy" id="167879"/>
    <lineage>
        <taxon>Bacteria</taxon>
        <taxon>Pseudomonadati</taxon>
        <taxon>Pseudomonadota</taxon>
        <taxon>Gammaproteobacteria</taxon>
        <taxon>Alteromonadales</taxon>
        <taxon>Colwelliaceae</taxon>
        <taxon>Colwellia</taxon>
    </lineage>
</organism>
<feature type="chain" id="PRO_0000230951" description="Transaldolase">
    <location>
        <begin position="1"/>
        <end position="320"/>
    </location>
</feature>
<feature type="active site" description="Schiff-base intermediate with substrate" evidence="2">
    <location>
        <position position="135"/>
    </location>
</feature>